<comment type="function">
    <text evidence="1">Co-chaperone that regulates diverse cellular pathways, such as programmed cell death and stress responses.</text>
</comment>
<comment type="subunit">
    <text evidence="1 5">Binds to the ATPase domain of HSP70/HSC70 chaperones (By similarity). Interacts with HSP70-1.</text>
</comment>
<comment type="tissue specificity">
    <text evidence="5">Detected in stems, leaves, flowers and roots.</text>
</comment>
<comment type="induction">
    <text evidence="5">By cold, by salicylic acid (SA), by abscisic acid (ABA) and by pathogen B.cinerea attack.</text>
</comment>
<comment type="disruption phenotype">
    <text evidence="5">Early flowering and shorter vegetative and reproductive phases, with more branched roots and inflorescences. Early senescence. Enhanced susceptibility to salt stress. Hypersensitivity to light.</text>
</comment>
<comment type="sequence caution" evidence="6">
    <conflict type="erroneous initiation">
        <sequence resource="EMBL-CDS" id="AAM63329"/>
    </conflict>
    <text>Truncated N-terminus.</text>
</comment>
<proteinExistence type="evidence at protein level"/>
<name>BAG4_ARATH</name>
<protein>
    <recommendedName>
        <fullName>BAG family molecular chaperone regulator 4</fullName>
    </recommendedName>
    <alternativeName>
        <fullName>Bcl-2-associated athanogene 4</fullName>
    </alternativeName>
</protein>
<reference key="1">
    <citation type="journal article" date="1999" name="Plant Mol. Biol.">
        <title>Fine sequence analysis of 60 kb around the Arabidopsis thaliana AtEm1 locus on chromosome III.</title>
        <authorList>
            <person name="Comella P."/>
            <person name="Wu H.-J."/>
            <person name="Laudie M."/>
            <person name="Berger C."/>
            <person name="Cooke R."/>
            <person name="Delseny M."/>
            <person name="Grellet F."/>
        </authorList>
    </citation>
    <scope>NUCLEOTIDE SEQUENCE [LARGE SCALE GENOMIC DNA]</scope>
    <source>
        <strain>cv. Columbia</strain>
    </source>
</reference>
<reference key="2">
    <citation type="journal article" date="2017" name="Plant J.">
        <title>Araport11: a complete reannotation of the Arabidopsis thaliana reference genome.</title>
        <authorList>
            <person name="Cheng C.Y."/>
            <person name="Krishnakumar V."/>
            <person name="Chan A.P."/>
            <person name="Thibaud-Nissen F."/>
            <person name="Schobel S."/>
            <person name="Town C.D."/>
        </authorList>
    </citation>
    <scope>GENOME REANNOTATION</scope>
    <scope>SEQUENCE REVISION</scope>
    <source>
        <strain>cv. Columbia</strain>
    </source>
</reference>
<reference key="3">
    <citation type="journal article" date="2003" name="Science">
        <title>Empirical analysis of transcriptional activity in the Arabidopsis genome.</title>
        <authorList>
            <person name="Yamada K."/>
            <person name="Lim J."/>
            <person name="Dale J.M."/>
            <person name="Chen H."/>
            <person name="Shinn P."/>
            <person name="Palm C.J."/>
            <person name="Southwick A.M."/>
            <person name="Wu H.C."/>
            <person name="Kim C.J."/>
            <person name="Nguyen M."/>
            <person name="Pham P.K."/>
            <person name="Cheuk R.F."/>
            <person name="Karlin-Newmann G."/>
            <person name="Liu S.X."/>
            <person name="Lam B."/>
            <person name="Sakano H."/>
            <person name="Wu T."/>
            <person name="Yu G."/>
            <person name="Miranda M."/>
            <person name="Quach H.L."/>
            <person name="Tripp M."/>
            <person name="Chang C.H."/>
            <person name="Lee J.M."/>
            <person name="Toriumi M.J."/>
            <person name="Chan M.M."/>
            <person name="Tang C.C."/>
            <person name="Onodera C.S."/>
            <person name="Deng J.M."/>
            <person name="Akiyama K."/>
            <person name="Ansari Y."/>
            <person name="Arakawa T."/>
            <person name="Banh J."/>
            <person name="Banno F."/>
            <person name="Bowser L."/>
            <person name="Brooks S.Y."/>
            <person name="Carninci P."/>
            <person name="Chao Q."/>
            <person name="Choy N."/>
            <person name="Enju A."/>
            <person name="Goldsmith A.D."/>
            <person name="Gurjal M."/>
            <person name="Hansen N.F."/>
            <person name="Hayashizaki Y."/>
            <person name="Johnson-Hopson C."/>
            <person name="Hsuan V.W."/>
            <person name="Iida K."/>
            <person name="Karnes M."/>
            <person name="Khan S."/>
            <person name="Koesema E."/>
            <person name="Ishida J."/>
            <person name="Jiang P.X."/>
            <person name="Jones T."/>
            <person name="Kawai J."/>
            <person name="Kamiya A."/>
            <person name="Meyers C."/>
            <person name="Nakajima M."/>
            <person name="Narusaka M."/>
            <person name="Seki M."/>
            <person name="Sakurai T."/>
            <person name="Satou M."/>
            <person name="Tamse R."/>
            <person name="Vaysberg M."/>
            <person name="Wallender E.K."/>
            <person name="Wong C."/>
            <person name="Yamamura Y."/>
            <person name="Yuan S."/>
            <person name="Shinozaki K."/>
            <person name="Davis R.W."/>
            <person name="Theologis A."/>
            <person name="Ecker J.R."/>
        </authorList>
    </citation>
    <scope>NUCLEOTIDE SEQUENCE [LARGE SCALE MRNA]</scope>
    <source>
        <strain>cv. Columbia</strain>
    </source>
</reference>
<reference key="4">
    <citation type="submission" date="2002-03" db="EMBL/GenBank/DDBJ databases">
        <title>Full-length cDNA from Arabidopsis thaliana.</title>
        <authorList>
            <person name="Brover V.V."/>
            <person name="Troukhan M.E."/>
            <person name="Alexandrov N.A."/>
            <person name="Lu Y.-P."/>
            <person name="Flavell R.B."/>
            <person name="Feldmann K.A."/>
        </authorList>
    </citation>
    <scope>NUCLEOTIDE SEQUENCE [LARGE SCALE MRNA]</scope>
</reference>
<reference key="5">
    <citation type="journal article" date="2003" name="Plant Sci.">
        <title>The BAG-family proteins in Arabidopsis thaliana.</title>
        <authorList>
            <person name="Juqiang Y."/>
            <person name="Cixin H."/>
            <person name="Hong Z."/>
        </authorList>
    </citation>
    <scope>GENE FAMILY</scope>
    <scope>NOMENCLATURE</scope>
</reference>
<reference key="6">
    <citation type="journal article" date="2006" name="J. Biol. Chem.">
        <title>Identification and functional characterization of the BAG protein family in Arabidopsis thaliana.</title>
        <authorList>
            <person name="Doukhanina E.V."/>
            <person name="Chen S."/>
            <person name="van der Zalm E."/>
            <person name="Godzik A."/>
            <person name="Reed J."/>
            <person name="Dickman M.B."/>
        </authorList>
    </citation>
    <scope>GENE FAMILY</scope>
    <scope>INTERACTION WITH HSP70-1</scope>
    <scope>DISRUPTION PHENOTYPE</scope>
    <scope>TISSUE SPECIFICITY</scope>
    <scope>INDUCTION</scope>
    <scope>MUTAGENESIS OF GLU-179 AND ASP-189</scope>
</reference>
<dbReference type="EMBL" id="AF049236">
    <property type="protein sequence ID" value="AAC14405.1"/>
    <property type="molecule type" value="Genomic_DNA"/>
</dbReference>
<dbReference type="EMBL" id="CP002686">
    <property type="protein sequence ID" value="AEE78842.1"/>
    <property type="molecule type" value="Genomic_DNA"/>
</dbReference>
<dbReference type="EMBL" id="AY090347">
    <property type="protein sequence ID" value="AAL91253.1"/>
    <property type="molecule type" value="mRNA"/>
</dbReference>
<dbReference type="EMBL" id="AY143837">
    <property type="protein sequence ID" value="AAN28776.1"/>
    <property type="molecule type" value="mRNA"/>
</dbReference>
<dbReference type="EMBL" id="AY086123">
    <property type="protein sequence ID" value="AAM63329.1"/>
    <property type="status" value="ALT_INIT"/>
    <property type="molecule type" value="mRNA"/>
</dbReference>
<dbReference type="PIR" id="T51149">
    <property type="entry name" value="T51149"/>
</dbReference>
<dbReference type="RefSeq" id="NP_190746.2">
    <property type="nucleotide sequence ID" value="NM_115037.8"/>
</dbReference>
<dbReference type="PDB" id="4HWH">
    <property type="method" value="X-ray"/>
    <property type="resolution" value="1.90 A"/>
    <property type="chains" value="A/B/C/D/E=138-223"/>
</dbReference>
<dbReference type="PDBsum" id="4HWH"/>
<dbReference type="SMR" id="Q8RX71"/>
<dbReference type="BioGRID" id="9659">
    <property type="interactions" value="3"/>
</dbReference>
<dbReference type="FunCoup" id="Q8RX71">
    <property type="interactions" value="474"/>
</dbReference>
<dbReference type="IntAct" id="Q8RX71">
    <property type="interactions" value="3"/>
</dbReference>
<dbReference type="STRING" id="3702.Q8RX71"/>
<dbReference type="PaxDb" id="3702-AT3G51780.1"/>
<dbReference type="ProteomicsDB" id="240737"/>
<dbReference type="EnsemblPlants" id="AT3G51780.1">
    <property type="protein sequence ID" value="AT3G51780.1"/>
    <property type="gene ID" value="AT3G51780"/>
</dbReference>
<dbReference type="GeneID" id="824341"/>
<dbReference type="Gramene" id="AT3G51780.1">
    <property type="protein sequence ID" value="AT3G51780.1"/>
    <property type="gene ID" value="AT3G51780"/>
</dbReference>
<dbReference type="KEGG" id="ath:AT3G51780"/>
<dbReference type="Araport" id="AT3G51780"/>
<dbReference type="TAIR" id="AT3G51780">
    <property type="gene designation" value="BAG4"/>
</dbReference>
<dbReference type="eggNOG" id="KOG4361">
    <property type="taxonomic scope" value="Eukaryota"/>
</dbReference>
<dbReference type="HOGENOM" id="CLU_043370_1_1_1"/>
<dbReference type="InParanoid" id="Q8RX71"/>
<dbReference type="OMA" id="HHNHETA"/>
<dbReference type="OrthoDB" id="417450at2759"/>
<dbReference type="PhylomeDB" id="Q8RX71"/>
<dbReference type="EvolutionaryTrace" id="Q8RX71"/>
<dbReference type="PRO" id="PR:Q8RX71"/>
<dbReference type="Proteomes" id="UP000006548">
    <property type="component" value="Chromosome 3"/>
</dbReference>
<dbReference type="ExpressionAtlas" id="Q8RX71">
    <property type="expression patterns" value="baseline and differential"/>
</dbReference>
<dbReference type="GO" id="GO:0005829">
    <property type="term" value="C:cytosol"/>
    <property type="evidence" value="ECO:0007005"/>
    <property type="project" value="TAIR"/>
</dbReference>
<dbReference type="GO" id="GO:0005783">
    <property type="term" value="C:endoplasmic reticulum"/>
    <property type="evidence" value="ECO:0000353"/>
    <property type="project" value="TAIR"/>
</dbReference>
<dbReference type="GO" id="GO:0070971">
    <property type="term" value="C:endoplasmic reticulum exit site"/>
    <property type="evidence" value="ECO:0000353"/>
    <property type="project" value="TAIR"/>
</dbReference>
<dbReference type="GO" id="GO:0051087">
    <property type="term" value="F:protein-folding chaperone binding"/>
    <property type="evidence" value="ECO:0007669"/>
    <property type="project" value="InterPro"/>
</dbReference>
<dbReference type="GO" id="GO:0043268">
    <property type="term" value="P:positive regulation of potassium ion transport"/>
    <property type="evidence" value="ECO:0000316"/>
    <property type="project" value="TAIR"/>
</dbReference>
<dbReference type="GO" id="GO:0006612">
    <property type="term" value="P:protein targeting to membrane"/>
    <property type="evidence" value="ECO:0000315"/>
    <property type="project" value="TAIR"/>
</dbReference>
<dbReference type="GO" id="GO:0010119">
    <property type="term" value="P:regulation of stomatal movement"/>
    <property type="evidence" value="ECO:0000316"/>
    <property type="project" value="TAIR"/>
</dbReference>
<dbReference type="GO" id="GO:0009409">
    <property type="term" value="P:response to cold"/>
    <property type="evidence" value="ECO:0000270"/>
    <property type="project" value="TAIR"/>
</dbReference>
<dbReference type="GO" id="GO:0009651">
    <property type="term" value="P:response to salt stress"/>
    <property type="evidence" value="ECO:0000315"/>
    <property type="project" value="TAIR"/>
</dbReference>
<dbReference type="GO" id="GO:0010228">
    <property type="term" value="P:vegetative to reproductive phase transition of meristem"/>
    <property type="evidence" value="ECO:0000315"/>
    <property type="project" value="TAIR"/>
</dbReference>
<dbReference type="CDD" id="cd17054">
    <property type="entry name" value="Ubl_AtBAG1_like"/>
    <property type="match status" value="1"/>
</dbReference>
<dbReference type="FunFam" id="3.10.20.90:FF:000298">
    <property type="entry name" value="BAG family molecular chaperone regulator 1"/>
    <property type="match status" value="1"/>
</dbReference>
<dbReference type="Gene3D" id="1.20.58.120">
    <property type="entry name" value="BAG domain"/>
    <property type="match status" value="1"/>
</dbReference>
<dbReference type="Gene3D" id="3.10.20.90">
    <property type="entry name" value="Phosphatidylinositol 3-kinase Catalytic Subunit, Chain A, domain 1"/>
    <property type="match status" value="1"/>
</dbReference>
<dbReference type="InterPro" id="IPR039773">
    <property type="entry name" value="BAG_chaperone_regulator"/>
</dbReference>
<dbReference type="InterPro" id="IPR036533">
    <property type="entry name" value="BAG_dom_sf"/>
</dbReference>
<dbReference type="InterPro" id="IPR003103">
    <property type="entry name" value="BAG_domain"/>
</dbReference>
<dbReference type="InterPro" id="IPR000626">
    <property type="entry name" value="Ubiquitin-like_dom"/>
</dbReference>
<dbReference type="InterPro" id="IPR029071">
    <property type="entry name" value="Ubiquitin-like_domsf"/>
</dbReference>
<dbReference type="PANTHER" id="PTHR12329:SF40">
    <property type="entry name" value="BAG FAMILY MOLECULAR CHAPERONE REGULATOR 4"/>
    <property type="match status" value="1"/>
</dbReference>
<dbReference type="PANTHER" id="PTHR12329">
    <property type="entry name" value="BCL2-ASSOCIATED ATHANOGENE"/>
    <property type="match status" value="1"/>
</dbReference>
<dbReference type="Pfam" id="PF02179">
    <property type="entry name" value="BAG"/>
    <property type="match status" value="1"/>
</dbReference>
<dbReference type="Pfam" id="PF00240">
    <property type="entry name" value="ubiquitin"/>
    <property type="match status" value="1"/>
</dbReference>
<dbReference type="SMART" id="SM00264">
    <property type="entry name" value="BAG"/>
    <property type="match status" value="1"/>
</dbReference>
<dbReference type="SUPFAM" id="SSF63491">
    <property type="entry name" value="BAG domain"/>
    <property type="match status" value="1"/>
</dbReference>
<dbReference type="SUPFAM" id="SSF54236">
    <property type="entry name" value="Ubiquitin-like"/>
    <property type="match status" value="1"/>
</dbReference>
<dbReference type="PROSITE" id="PS51035">
    <property type="entry name" value="BAG"/>
    <property type="match status" value="1"/>
</dbReference>
<dbReference type="PROSITE" id="PS50053">
    <property type="entry name" value="UBIQUITIN_2"/>
    <property type="match status" value="1"/>
</dbReference>
<accession>Q8RX71</accession>
<accession>O65021</accession>
<accession>Q8LDA0</accession>
<evidence type="ECO:0000250" key="1"/>
<evidence type="ECO:0000255" key="2">
    <source>
        <dbReference type="PROSITE-ProRule" id="PRU00214"/>
    </source>
</evidence>
<evidence type="ECO:0000255" key="3">
    <source>
        <dbReference type="PROSITE-ProRule" id="PRU00369"/>
    </source>
</evidence>
<evidence type="ECO:0000256" key="4">
    <source>
        <dbReference type="SAM" id="MobiDB-lite"/>
    </source>
</evidence>
<evidence type="ECO:0000269" key="5">
    <source>
    </source>
</evidence>
<evidence type="ECO:0000305" key="6"/>
<evidence type="ECO:0007829" key="7">
    <source>
        <dbReference type="PDB" id="4HWH"/>
    </source>
</evidence>
<keyword id="KW-0002">3D-structure</keyword>
<keyword id="KW-0143">Chaperone</keyword>
<keyword id="KW-1185">Reference proteome</keyword>
<sequence>MMHNSTEESEWEVRPGGMLVQRRDDAASSDHKPLQDPDSASAAFAQTIRITVSHGSSHHDLHISAHATFGDVKKALVQKTGLEASELKILFRGVERDDAEQLQAAGVKDASKLVVVVEDTNKRVEQQPPVVTKEMEKAIAAVNAVTGEVDKLSDRVVALEVAVNGGTQVAVREFDMAAELLMRQLLKLDGIEAEGDAKVQRKAEVRRIQNLQEAVDKLKARCSNPFVDQSKAAAVSTEWESFGNGVGSLNPPPPASPSANVTQDWEKFD</sequence>
<gene>
    <name type="primary">BAG4</name>
    <name type="ordered locus">At3g51780</name>
    <name type="ORF">ATEM1.3</name>
</gene>
<feature type="chain" id="PRO_0000415524" description="BAG family molecular chaperone regulator 4">
    <location>
        <begin position="1"/>
        <end position="269"/>
    </location>
</feature>
<feature type="domain" description="Ubiquitin-like" evidence="2">
    <location>
        <begin position="46"/>
        <end position="122"/>
    </location>
</feature>
<feature type="domain" description="BAG" evidence="3">
    <location>
        <begin position="138"/>
        <end position="219"/>
    </location>
</feature>
<feature type="region of interest" description="Disordered" evidence="4">
    <location>
        <begin position="1"/>
        <end position="40"/>
    </location>
</feature>
<feature type="region of interest" description="Disordered" evidence="4">
    <location>
        <begin position="241"/>
        <end position="269"/>
    </location>
</feature>
<feature type="compositionally biased region" description="Basic and acidic residues" evidence="4">
    <location>
        <begin position="21"/>
        <end position="35"/>
    </location>
</feature>
<feature type="mutagenesis site" description="Abolishes interaction with HSP70-1." evidence="5">
    <original>E</original>
    <variation>G</variation>
    <location>
        <position position="179"/>
    </location>
</feature>
<feature type="mutagenesis site" description="Abolishes interaction with HSP70-1." evidence="5">
    <original>D</original>
    <variation>S</variation>
    <location>
        <position position="189"/>
    </location>
</feature>
<feature type="sequence conflict" description="In Ref. 1; AAC14405." evidence="6" ref="1">
    <original>A</original>
    <variation>T</variation>
    <location>
        <position position="26"/>
    </location>
</feature>
<feature type="helix" evidence="7">
    <location>
        <begin position="138"/>
        <end position="164"/>
    </location>
</feature>
<feature type="helix" evidence="7">
    <location>
        <begin position="171"/>
        <end position="189"/>
    </location>
</feature>
<feature type="helix" evidence="7">
    <location>
        <begin position="198"/>
        <end position="221"/>
    </location>
</feature>
<organism>
    <name type="scientific">Arabidopsis thaliana</name>
    <name type="common">Mouse-ear cress</name>
    <dbReference type="NCBI Taxonomy" id="3702"/>
    <lineage>
        <taxon>Eukaryota</taxon>
        <taxon>Viridiplantae</taxon>
        <taxon>Streptophyta</taxon>
        <taxon>Embryophyta</taxon>
        <taxon>Tracheophyta</taxon>
        <taxon>Spermatophyta</taxon>
        <taxon>Magnoliopsida</taxon>
        <taxon>eudicotyledons</taxon>
        <taxon>Gunneridae</taxon>
        <taxon>Pentapetalae</taxon>
        <taxon>rosids</taxon>
        <taxon>malvids</taxon>
        <taxon>Brassicales</taxon>
        <taxon>Brassicaceae</taxon>
        <taxon>Camelineae</taxon>
        <taxon>Arabidopsis</taxon>
    </lineage>
</organism>